<feature type="chain" id="PRO_0000285089" description="N6-Methyl-AMP deaminase">
    <location>
        <begin position="1"/>
        <end position="351"/>
    </location>
</feature>
<feature type="active site" description="Proton donor" evidence="1">
    <location>
        <position position="210"/>
    </location>
</feature>
<feature type="binding site" evidence="3">
    <location>
        <position position="23"/>
    </location>
    <ligand>
        <name>Zn(2+)</name>
        <dbReference type="ChEBI" id="CHEBI:29105"/>
        <note>catalytic</note>
    </ligand>
</feature>
<feature type="binding site" evidence="3">
    <location>
        <position position="25"/>
    </location>
    <ligand>
        <name>N(6)-methyl-AMP</name>
        <dbReference type="ChEBI" id="CHEBI:144842"/>
    </ligand>
</feature>
<feature type="binding site" evidence="3">
    <location>
        <position position="25"/>
    </location>
    <ligand>
        <name>Zn(2+)</name>
        <dbReference type="ChEBI" id="CHEBI:29105"/>
        <note>catalytic</note>
    </ligand>
</feature>
<feature type="binding site" evidence="3">
    <location>
        <position position="27"/>
    </location>
    <ligand>
        <name>N(6)-methyl-AMP</name>
        <dbReference type="ChEBI" id="CHEBI:144842"/>
    </ligand>
</feature>
<feature type="binding site" evidence="3">
    <location>
        <position position="73"/>
    </location>
    <ligand>
        <name>N(6)-methyl-AMP</name>
        <dbReference type="ChEBI" id="CHEBI:144842"/>
    </ligand>
</feature>
<feature type="binding site" evidence="3">
    <location>
        <begin position="105"/>
        <end position="108"/>
    </location>
    <ligand>
        <name>N(6)-methyl-AMP</name>
        <dbReference type="ChEBI" id="CHEBI:144842"/>
    </ligand>
</feature>
<feature type="binding site" evidence="3">
    <location>
        <position position="147"/>
    </location>
    <ligand>
        <name>N(6)-methyl-AMP</name>
        <dbReference type="ChEBI" id="CHEBI:144842"/>
    </ligand>
</feature>
<feature type="binding site" evidence="3">
    <location>
        <position position="180"/>
    </location>
    <ligand>
        <name>N(6)-methyl-AMP</name>
        <dbReference type="ChEBI" id="CHEBI:144842"/>
    </ligand>
</feature>
<feature type="binding site" evidence="3">
    <location>
        <position position="207"/>
    </location>
    <ligand>
        <name>Zn(2+)</name>
        <dbReference type="ChEBI" id="CHEBI:29105"/>
        <note>catalytic</note>
    </ligand>
</feature>
<feature type="binding site" evidence="3">
    <location>
        <position position="210"/>
    </location>
    <ligand>
        <name>N(6)-methyl-AMP</name>
        <dbReference type="ChEBI" id="CHEBI:144842"/>
    </ligand>
</feature>
<feature type="binding site" evidence="3">
    <location>
        <position position="292"/>
    </location>
    <ligand>
        <name>N(6)-methyl-AMP</name>
        <dbReference type="ChEBI" id="CHEBI:144842"/>
    </ligand>
</feature>
<feature type="binding site" evidence="3">
    <location>
        <position position="292"/>
    </location>
    <ligand>
        <name>Zn(2+)</name>
        <dbReference type="ChEBI" id="CHEBI:29105"/>
        <note>catalytic</note>
    </ligand>
</feature>
<feature type="binding site" evidence="3">
    <location>
        <position position="293"/>
    </location>
    <ligand>
        <name>N(6)-methyl-AMP</name>
        <dbReference type="ChEBI" id="CHEBI:144842"/>
    </ligand>
</feature>
<feature type="site" description="Important for catalytic activity" evidence="1">
    <location>
        <position position="231"/>
    </location>
</feature>
<organism>
    <name type="scientific">Bos taurus</name>
    <name type="common">Bovine</name>
    <dbReference type="NCBI Taxonomy" id="9913"/>
    <lineage>
        <taxon>Eukaryota</taxon>
        <taxon>Metazoa</taxon>
        <taxon>Chordata</taxon>
        <taxon>Craniata</taxon>
        <taxon>Vertebrata</taxon>
        <taxon>Euteleostomi</taxon>
        <taxon>Mammalia</taxon>
        <taxon>Eutheria</taxon>
        <taxon>Laurasiatheria</taxon>
        <taxon>Artiodactyla</taxon>
        <taxon>Ruminantia</taxon>
        <taxon>Pecora</taxon>
        <taxon>Bovidae</taxon>
        <taxon>Bovinae</taxon>
        <taxon>Bos</taxon>
    </lineage>
</organism>
<gene>
    <name evidence="2" type="primary">MAPDA</name>
    <name type="synonym">ADAL</name>
</gene>
<proteinExistence type="evidence at transcript level"/>
<name>ADAL_BOVIN</name>
<accession>Q0VC13</accession>
<evidence type="ECO:0000250" key="1">
    <source>
        <dbReference type="UniProtKB" id="P03958"/>
    </source>
</evidence>
<evidence type="ECO:0000250" key="2">
    <source>
        <dbReference type="UniProtKB" id="Q6DHV7"/>
    </source>
</evidence>
<evidence type="ECO:0000250" key="3">
    <source>
        <dbReference type="UniProtKB" id="Q8LPL7"/>
    </source>
</evidence>
<evidence type="ECO:0000305" key="4"/>
<sequence>MMEAEEQPWKTTFYSKLPKVELHAHLNGSISSNTIRKLIAKKPDLKIHDQMTMIDKGEKRTLEECLQMFQIIHLLTTTPEDVLMVTKDVIKEFADDGVKYLELRSTPRGEDATGMTKKTYVESILEGIKQSKEENVDIDVRYLISIDRRGGSSAAKEAVKLAEEFFLSAEDTVLGLDLSGDPSAGQAKDFLEPLLEAKKSGLKLALHLSEIPNQKTETQVLLNLFPDRIGHGTFLSSSEEGSPDLVDFVRQHQIPLELCLTSNVKSQTVPAYDQHHFGFWYSVAHPAVICTDDKGVFATRLSQEYQLVAETFHLTQSQVWDLSYESISYIFASDSTKADLRKKWSHLKPHF</sequence>
<protein>
    <recommendedName>
        <fullName evidence="2">N6-Methyl-AMP deaminase</fullName>
        <ecNumber evidence="2">3.5.4.-</ecNumber>
    </recommendedName>
    <alternativeName>
        <fullName>Adenosine deaminase-like protein</fullName>
    </alternativeName>
</protein>
<dbReference type="EC" id="3.5.4.-" evidence="2"/>
<dbReference type="EMBL" id="BC120402">
    <property type="protein sequence ID" value="AAI20403.1"/>
    <property type="molecule type" value="mRNA"/>
</dbReference>
<dbReference type="RefSeq" id="NP_001069045.1">
    <property type="nucleotide sequence ID" value="NM_001075577.1"/>
</dbReference>
<dbReference type="SMR" id="Q0VC13"/>
<dbReference type="FunCoup" id="Q0VC13">
    <property type="interactions" value="1173"/>
</dbReference>
<dbReference type="STRING" id="9913.ENSBTAP00000019248"/>
<dbReference type="PaxDb" id="9913-ENSBTAP00000019248"/>
<dbReference type="GeneID" id="512667"/>
<dbReference type="KEGG" id="bta:512667"/>
<dbReference type="CTD" id="75894"/>
<dbReference type="eggNOG" id="KOG1097">
    <property type="taxonomic scope" value="Eukaryota"/>
</dbReference>
<dbReference type="InParanoid" id="Q0VC13"/>
<dbReference type="OrthoDB" id="272271at2759"/>
<dbReference type="Proteomes" id="UP000009136">
    <property type="component" value="Unplaced"/>
</dbReference>
<dbReference type="GO" id="GO:0004000">
    <property type="term" value="F:adenosine deaminase activity"/>
    <property type="evidence" value="ECO:0000318"/>
    <property type="project" value="GO_Central"/>
</dbReference>
<dbReference type="GO" id="GO:0046872">
    <property type="term" value="F:metal ion binding"/>
    <property type="evidence" value="ECO:0007669"/>
    <property type="project" value="UniProtKB-KW"/>
</dbReference>
<dbReference type="GO" id="GO:0062154">
    <property type="term" value="F:N6-methyl-AMP deaminase activity"/>
    <property type="evidence" value="ECO:0007669"/>
    <property type="project" value="RHEA"/>
</dbReference>
<dbReference type="GO" id="GO:0006154">
    <property type="term" value="P:adenosine catabolic process"/>
    <property type="evidence" value="ECO:0000318"/>
    <property type="project" value="GO_Central"/>
</dbReference>
<dbReference type="GO" id="GO:0046103">
    <property type="term" value="P:inosine biosynthetic process"/>
    <property type="evidence" value="ECO:0000318"/>
    <property type="project" value="GO_Central"/>
</dbReference>
<dbReference type="GO" id="GO:0009117">
    <property type="term" value="P:nucleotide metabolic process"/>
    <property type="evidence" value="ECO:0007669"/>
    <property type="project" value="UniProtKB-KW"/>
</dbReference>
<dbReference type="CDD" id="cd00443">
    <property type="entry name" value="ADA_AMPD"/>
    <property type="match status" value="1"/>
</dbReference>
<dbReference type="FunFam" id="3.20.20.140:FF:000033">
    <property type="entry name" value="Adenosine deaminase-like protein"/>
    <property type="match status" value="1"/>
</dbReference>
<dbReference type="Gene3D" id="3.20.20.140">
    <property type="entry name" value="Metal-dependent hydrolases"/>
    <property type="match status" value="1"/>
</dbReference>
<dbReference type="InterPro" id="IPR001365">
    <property type="entry name" value="A_deaminase_dom"/>
</dbReference>
<dbReference type="InterPro" id="IPR006330">
    <property type="entry name" value="Ado/ade_deaminase"/>
</dbReference>
<dbReference type="InterPro" id="IPR032466">
    <property type="entry name" value="Metal_Hydrolase"/>
</dbReference>
<dbReference type="PANTHER" id="PTHR11409">
    <property type="entry name" value="ADENOSINE DEAMINASE"/>
    <property type="match status" value="1"/>
</dbReference>
<dbReference type="PANTHER" id="PTHR11409:SF42">
    <property type="entry name" value="ADENOSINE DEAMINASE-LIKE PROTEIN"/>
    <property type="match status" value="1"/>
</dbReference>
<dbReference type="Pfam" id="PF00962">
    <property type="entry name" value="A_deaminase"/>
    <property type="match status" value="1"/>
</dbReference>
<dbReference type="SUPFAM" id="SSF51556">
    <property type="entry name" value="Metallo-dependent hydrolases"/>
    <property type="match status" value="1"/>
</dbReference>
<reference key="1">
    <citation type="submission" date="2006-08" db="EMBL/GenBank/DDBJ databases">
        <authorList>
            <consortium name="NIH - Mammalian Gene Collection (MGC) project"/>
        </authorList>
    </citation>
    <scope>NUCLEOTIDE SEQUENCE [LARGE SCALE MRNA]</scope>
    <source>
        <strain>Hereford</strain>
        <tissue>Fetal skin</tissue>
    </source>
</reference>
<comment type="function">
    <text evidence="2">Catalyzes the hydrolysis of the free cytosolic methylated adenosine nucleotide N(6)-methyl-AMP (N6-mAMP) to produce inositol monophosphate (IMP) and methylamine. Is required for the catabolism of cytosolic N6-mAMP, which is derived from the degradation of mRNA containing N6-methylated adenine (m6A).</text>
</comment>
<comment type="catalytic activity">
    <reaction evidence="2">
        <text>N(6)-methyl-AMP + H2O + H(+) = IMP + methylamine</text>
        <dbReference type="Rhea" id="RHEA:16001"/>
        <dbReference type="ChEBI" id="CHEBI:15377"/>
        <dbReference type="ChEBI" id="CHEBI:15378"/>
        <dbReference type="ChEBI" id="CHEBI:58053"/>
        <dbReference type="ChEBI" id="CHEBI:59338"/>
        <dbReference type="ChEBI" id="CHEBI:144842"/>
    </reaction>
    <physiologicalReaction direction="left-to-right" evidence="2">
        <dbReference type="Rhea" id="RHEA:16002"/>
    </physiologicalReaction>
</comment>
<comment type="cofactor">
    <cofactor evidence="2">
        <name>Zn(2+)</name>
        <dbReference type="ChEBI" id="CHEBI:29105"/>
    </cofactor>
    <text evidence="2">Binds 1 zinc ion per subunit.</text>
</comment>
<comment type="subunit">
    <text evidence="2">Monomer.</text>
</comment>
<comment type="similarity">
    <text evidence="4">Belongs to the metallo-dependent hydrolases superfamily. Adenosine and AMP deaminases family.</text>
</comment>
<keyword id="KW-0378">Hydrolase</keyword>
<keyword id="KW-0479">Metal-binding</keyword>
<keyword id="KW-0546">Nucleotide metabolism</keyword>
<keyword id="KW-1185">Reference proteome</keyword>
<keyword id="KW-0862">Zinc</keyword>